<comment type="function">
    <text evidence="1">This is one of the proteins that bind and probably mediate the attachment of the 5S RNA into the large ribosomal subunit, where it forms part of the central protuberance. In the 70S ribosome it contacts protein S13 of the 30S subunit (bridge B1b), connecting the 2 subunits; this bridge is implicated in subunit movement. Contacts the P site tRNA; the 5S rRNA and some of its associated proteins might help stabilize positioning of ribosome-bound tRNAs.</text>
</comment>
<comment type="subunit">
    <text evidence="1">Part of the 50S ribosomal subunit; part of the 5S rRNA/L5/L18/L25 subcomplex. Contacts the 5S rRNA and the P site tRNA. Forms a bridge to the 30S subunit in the 70S ribosome.</text>
</comment>
<comment type="similarity">
    <text evidence="1">Belongs to the universal ribosomal protein uL5 family.</text>
</comment>
<reference key="1">
    <citation type="submission" date="2007-03" db="EMBL/GenBank/DDBJ databases">
        <title>Complete sequence of Desulfotomaculum reducens MI-1.</title>
        <authorList>
            <consortium name="US DOE Joint Genome Institute"/>
            <person name="Copeland A."/>
            <person name="Lucas S."/>
            <person name="Lapidus A."/>
            <person name="Barry K."/>
            <person name="Detter J.C."/>
            <person name="Glavina del Rio T."/>
            <person name="Hammon N."/>
            <person name="Israni S."/>
            <person name="Dalin E."/>
            <person name="Tice H."/>
            <person name="Pitluck S."/>
            <person name="Sims D."/>
            <person name="Brettin T."/>
            <person name="Bruce D."/>
            <person name="Han C."/>
            <person name="Tapia R."/>
            <person name="Schmutz J."/>
            <person name="Larimer F."/>
            <person name="Land M."/>
            <person name="Hauser L."/>
            <person name="Kyrpides N."/>
            <person name="Kim E."/>
            <person name="Tebo B.M."/>
            <person name="Richardson P."/>
        </authorList>
    </citation>
    <scope>NUCLEOTIDE SEQUENCE [LARGE SCALE GENOMIC DNA]</scope>
    <source>
        <strain>ATCC BAA-1160 / DSM 100696 / MI-1</strain>
    </source>
</reference>
<sequence length="181" mass="20425">MARLKDKYLNEVQPNLMQKFGYKNIMQVPKLEKVIINIGLGEAVQNSKAVDAAVGDLMAITGQRPITTKAKKSIAAFKLRAGMTIGTKVTLRGERMYEFVDRLFNVALPRVRDFRGISDKSFDGRGNYTMGLKEQLIFPEIEYDKIDKVRGMDITFVTTAKTDEEARELLKLMGIPFVKVS</sequence>
<feature type="chain" id="PRO_1000073286" description="Large ribosomal subunit protein uL5">
    <location>
        <begin position="1"/>
        <end position="181"/>
    </location>
</feature>
<evidence type="ECO:0000255" key="1">
    <source>
        <dbReference type="HAMAP-Rule" id="MF_01333"/>
    </source>
</evidence>
<evidence type="ECO:0000305" key="2"/>
<organism>
    <name type="scientific">Desulforamulus reducens (strain ATCC BAA-1160 / DSM 100696 / MI-1)</name>
    <name type="common">Desulfotomaculum reducens</name>
    <dbReference type="NCBI Taxonomy" id="349161"/>
    <lineage>
        <taxon>Bacteria</taxon>
        <taxon>Bacillati</taxon>
        <taxon>Bacillota</taxon>
        <taxon>Clostridia</taxon>
        <taxon>Eubacteriales</taxon>
        <taxon>Peptococcaceae</taxon>
        <taxon>Desulforamulus</taxon>
    </lineage>
</organism>
<dbReference type="EMBL" id="CP000612">
    <property type="protein sequence ID" value="ABO48776.1"/>
    <property type="molecule type" value="Genomic_DNA"/>
</dbReference>
<dbReference type="RefSeq" id="WP_011876616.1">
    <property type="nucleotide sequence ID" value="NC_009253.1"/>
</dbReference>
<dbReference type="SMR" id="A4J123"/>
<dbReference type="STRING" id="349161.Dred_0227"/>
<dbReference type="KEGG" id="drm:Dred_0227"/>
<dbReference type="eggNOG" id="COG0094">
    <property type="taxonomic scope" value="Bacteria"/>
</dbReference>
<dbReference type="HOGENOM" id="CLU_061015_2_1_9"/>
<dbReference type="OrthoDB" id="9806626at2"/>
<dbReference type="Proteomes" id="UP000001556">
    <property type="component" value="Chromosome"/>
</dbReference>
<dbReference type="GO" id="GO:1990904">
    <property type="term" value="C:ribonucleoprotein complex"/>
    <property type="evidence" value="ECO:0007669"/>
    <property type="project" value="UniProtKB-KW"/>
</dbReference>
<dbReference type="GO" id="GO:0005840">
    <property type="term" value="C:ribosome"/>
    <property type="evidence" value="ECO:0007669"/>
    <property type="project" value="UniProtKB-KW"/>
</dbReference>
<dbReference type="GO" id="GO:0019843">
    <property type="term" value="F:rRNA binding"/>
    <property type="evidence" value="ECO:0007669"/>
    <property type="project" value="UniProtKB-UniRule"/>
</dbReference>
<dbReference type="GO" id="GO:0003735">
    <property type="term" value="F:structural constituent of ribosome"/>
    <property type="evidence" value="ECO:0007669"/>
    <property type="project" value="InterPro"/>
</dbReference>
<dbReference type="GO" id="GO:0000049">
    <property type="term" value="F:tRNA binding"/>
    <property type="evidence" value="ECO:0007669"/>
    <property type="project" value="UniProtKB-UniRule"/>
</dbReference>
<dbReference type="GO" id="GO:0006412">
    <property type="term" value="P:translation"/>
    <property type="evidence" value="ECO:0007669"/>
    <property type="project" value="UniProtKB-UniRule"/>
</dbReference>
<dbReference type="FunFam" id="3.30.1440.10:FF:000001">
    <property type="entry name" value="50S ribosomal protein L5"/>
    <property type="match status" value="1"/>
</dbReference>
<dbReference type="Gene3D" id="3.30.1440.10">
    <property type="match status" value="1"/>
</dbReference>
<dbReference type="HAMAP" id="MF_01333_B">
    <property type="entry name" value="Ribosomal_uL5_B"/>
    <property type="match status" value="1"/>
</dbReference>
<dbReference type="InterPro" id="IPR002132">
    <property type="entry name" value="Ribosomal_uL5"/>
</dbReference>
<dbReference type="InterPro" id="IPR020930">
    <property type="entry name" value="Ribosomal_uL5_bac-type"/>
</dbReference>
<dbReference type="InterPro" id="IPR031309">
    <property type="entry name" value="Ribosomal_uL5_C"/>
</dbReference>
<dbReference type="InterPro" id="IPR020929">
    <property type="entry name" value="Ribosomal_uL5_CS"/>
</dbReference>
<dbReference type="InterPro" id="IPR022803">
    <property type="entry name" value="Ribosomal_uL5_dom_sf"/>
</dbReference>
<dbReference type="InterPro" id="IPR031310">
    <property type="entry name" value="Ribosomal_uL5_N"/>
</dbReference>
<dbReference type="NCBIfam" id="NF000585">
    <property type="entry name" value="PRK00010.1"/>
    <property type="match status" value="1"/>
</dbReference>
<dbReference type="PANTHER" id="PTHR11994">
    <property type="entry name" value="60S RIBOSOMAL PROTEIN L11-RELATED"/>
    <property type="match status" value="1"/>
</dbReference>
<dbReference type="Pfam" id="PF00281">
    <property type="entry name" value="Ribosomal_L5"/>
    <property type="match status" value="1"/>
</dbReference>
<dbReference type="Pfam" id="PF00673">
    <property type="entry name" value="Ribosomal_L5_C"/>
    <property type="match status" value="1"/>
</dbReference>
<dbReference type="PIRSF" id="PIRSF002161">
    <property type="entry name" value="Ribosomal_L5"/>
    <property type="match status" value="1"/>
</dbReference>
<dbReference type="SUPFAM" id="SSF55282">
    <property type="entry name" value="RL5-like"/>
    <property type="match status" value="1"/>
</dbReference>
<dbReference type="PROSITE" id="PS00358">
    <property type="entry name" value="RIBOSOMAL_L5"/>
    <property type="match status" value="1"/>
</dbReference>
<gene>
    <name evidence="1" type="primary">rplE</name>
    <name type="ordered locus">Dred_0227</name>
</gene>
<protein>
    <recommendedName>
        <fullName evidence="1">Large ribosomal subunit protein uL5</fullName>
    </recommendedName>
    <alternativeName>
        <fullName evidence="2">50S ribosomal protein L5</fullName>
    </alternativeName>
</protein>
<keyword id="KW-1185">Reference proteome</keyword>
<keyword id="KW-0687">Ribonucleoprotein</keyword>
<keyword id="KW-0689">Ribosomal protein</keyword>
<keyword id="KW-0694">RNA-binding</keyword>
<keyword id="KW-0699">rRNA-binding</keyword>
<keyword id="KW-0820">tRNA-binding</keyword>
<accession>A4J123</accession>
<proteinExistence type="inferred from homology"/>
<name>RL5_DESRM</name>